<evidence type="ECO:0000255" key="1">
    <source>
        <dbReference type="HAMAP-Rule" id="MF_00271"/>
    </source>
</evidence>
<evidence type="ECO:0000256" key="2">
    <source>
        <dbReference type="SAM" id="MobiDB-lite"/>
    </source>
</evidence>
<accession>Q18FB9</accession>
<name>AATD_HALWD</name>
<reference key="1">
    <citation type="journal article" date="2006" name="BMC Genomics">
        <title>The genome of the square archaeon Haloquadratum walsbyi: life at the limits of water activity.</title>
        <authorList>
            <person name="Bolhuis H."/>
            <person name="Palm P."/>
            <person name="Wende A."/>
            <person name="Falb M."/>
            <person name="Rampp M."/>
            <person name="Rodriguez-Valera F."/>
            <person name="Pfeiffer F."/>
            <person name="Oesterhelt D."/>
        </authorList>
    </citation>
    <scope>NUCLEOTIDE SEQUENCE [LARGE SCALE GENOMIC DNA]</scope>
    <source>
        <strain>DSM 16790 / HBSQ001</strain>
    </source>
</reference>
<keyword id="KW-0066">ATP synthesis</keyword>
<keyword id="KW-1003">Cell membrane</keyword>
<keyword id="KW-0375">Hydrogen ion transport</keyword>
<keyword id="KW-0406">Ion transport</keyword>
<keyword id="KW-0472">Membrane</keyword>
<keyword id="KW-1185">Reference proteome</keyword>
<keyword id="KW-0813">Transport</keyword>
<feature type="chain" id="PRO_1000059160" description="A-type ATP synthase subunit D">
    <location>
        <begin position="1"/>
        <end position="232"/>
    </location>
</feature>
<feature type="region of interest" description="Disordered" evidence="2">
    <location>
        <begin position="200"/>
        <end position="232"/>
    </location>
</feature>
<feature type="compositionally biased region" description="Acidic residues" evidence="2">
    <location>
        <begin position="209"/>
        <end position="222"/>
    </location>
</feature>
<comment type="function">
    <text evidence="1">Component of the A-type ATP synthase that produces ATP from ADP in the presence of a proton gradient across the membrane.</text>
</comment>
<comment type="subunit">
    <text evidence="1">Has multiple subunits with at least A(3), B(3), C, D, E, F, H, I and proteolipid K(x).</text>
</comment>
<comment type="subcellular location">
    <subcellularLocation>
        <location evidence="1">Cell membrane</location>
        <topology evidence="1">Peripheral membrane protein</topology>
    </subcellularLocation>
</comment>
<comment type="similarity">
    <text evidence="1">Belongs to the V-ATPase D subunit family.</text>
</comment>
<proteinExistence type="inferred from homology"/>
<protein>
    <recommendedName>
        <fullName evidence="1">A-type ATP synthase subunit D</fullName>
    </recommendedName>
</protein>
<organism>
    <name type="scientific">Haloquadratum walsbyi (strain DSM 16790 / HBSQ001)</name>
    <dbReference type="NCBI Taxonomy" id="362976"/>
    <lineage>
        <taxon>Archaea</taxon>
        <taxon>Methanobacteriati</taxon>
        <taxon>Methanobacteriota</taxon>
        <taxon>Stenosarchaea group</taxon>
        <taxon>Halobacteria</taxon>
        <taxon>Halobacteriales</taxon>
        <taxon>Haloferacaceae</taxon>
        <taxon>Haloquadratum</taxon>
    </lineage>
</organism>
<sequence>MAEDVKPTRKNLMAIDDRIQLSERGHDTLEQKRDGLIMEFMDILDQAQDVRSDLNANYETAQQKLNMARAMEGDVAVRGAAAALKEHPEITTRSKNIMGVVVPQIESSRVKKSLDQRGYGLLGSSARIDEAADAYEELIETIILAAEVETAMKKMLKEIETTKRRVNALEFKLLPDLYENKEYIEQKLEEQEREEIFRLKKIKNKKEAEEEDEDEDESEMTDETVVQTPADD</sequence>
<gene>
    <name evidence="1" type="primary">atpD</name>
    <name type="ordered locus">HQ_3242A</name>
</gene>
<dbReference type="EMBL" id="AM180088">
    <property type="protein sequence ID" value="CAJ53339.1"/>
    <property type="molecule type" value="Genomic_DNA"/>
</dbReference>
<dbReference type="RefSeq" id="WP_011572444.1">
    <property type="nucleotide sequence ID" value="NC_008212.1"/>
</dbReference>
<dbReference type="SMR" id="Q18FB9"/>
<dbReference type="STRING" id="362976.HQ_3242A"/>
<dbReference type="GeneID" id="4193750"/>
<dbReference type="KEGG" id="hwa:HQ_3242A"/>
<dbReference type="eggNOG" id="arCOG04101">
    <property type="taxonomic scope" value="Archaea"/>
</dbReference>
<dbReference type="HOGENOM" id="CLU_069688_2_1_2"/>
<dbReference type="Proteomes" id="UP000001975">
    <property type="component" value="Chromosome"/>
</dbReference>
<dbReference type="GO" id="GO:0005886">
    <property type="term" value="C:plasma membrane"/>
    <property type="evidence" value="ECO:0007669"/>
    <property type="project" value="UniProtKB-SubCell"/>
</dbReference>
<dbReference type="GO" id="GO:0005524">
    <property type="term" value="F:ATP binding"/>
    <property type="evidence" value="ECO:0007669"/>
    <property type="project" value="UniProtKB-UniRule"/>
</dbReference>
<dbReference type="GO" id="GO:0046933">
    <property type="term" value="F:proton-transporting ATP synthase activity, rotational mechanism"/>
    <property type="evidence" value="ECO:0007669"/>
    <property type="project" value="UniProtKB-UniRule"/>
</dbReference>
<dbReference type="GO" id="GO:0046961">
    <property type="term" value="F:proton-transporting ATPase activity, rotational mechanism"/>
    <property type="evidence" value="ECO:0007669"/>
    <property type="project" value="InterPro"/>
</dbReference>
<dbReference type="GO" id="GO:0042777">
    <property type="term" value="P:proton motive force-driven plasma membrane ATP synthesis"/>
    <property type="evidence" value="ECO:0007669"/>
    <property type="project" value="UniProtKB-UniRule"/>
</dbReference>
<dbReference type="FunFam" id="1.10.287.3240:FF:000007">
    <property type="entry name" value="V-type ATP synthase subunit D"/>
    <property type="match status" value="1"/>
</dbReference>
<dbReference type="Gene3D" id="1.10.287.3240">
    <property type="match status" value="1"/>
</dbReference>
<dbReference type="HAMAP" id="MF_00271">
    <property type="entry name" value="ATP_synth_D_arch"/>
    <property type="match status" value="1"/>
</dbReference>
<dbReference type="InterPro" id="IPR002699">
    <property type="entry name" value="V_ATPase_D"/>
</dbReference>
<dbReference type="NCBIfam" id="NF001542">
    <property type="entry name" value="PRK00373.1-1"/>
    <property type="match status" value="1"/>
</dbReference>
<dbReference type="NCBIfam" id="NF001545">
    <property type="entry name" value="PRK00373.1-4"/>
    <property type="match status" value="1"/>
</dbReference>
<dbReference type="NCBIfam" id="TIGR00309">
    <property type="entry name" value="V_ATPase_subD"/>
    <property type="match status" value="1"/>
</dbReference>
<dbReference type="PANTHER" id="PTHR11671">
    <property type="entry name" value="V-TYPE ATP SYNTHASE SUBUNIT D"/>
    <property type="match status" value="1"/>
</dbReference>
<dbReference type="Pfam" id="PF01813">
    <property type="entry name" value="ATP-synt_D"/>
    <property type="match status" value="1"/>
</dbReference>